<keyword id="KW-0010">Activator</keyword>
<keyword id="KW-0238">DNA-binding</keyword>
<keyword id="KW-0936">Ethylene signaling pathway</keyword>
<keyword id="KW-0539">Nucleus</keyword>
<keyword id="KW-1185">Reference proteome</keyword>
<keyword id="KW-0804">Transcription</keyword>
<keyword id="KW-0805">Transcription regulation</keyword>
<organism>
    <name type="scientific">Arabidopsis thaliana</name>
    <name type="common">Mouse-ear cress</name>
    <dbReference type="NCBI Taxonomy" id="3702"/>
    <lineage>
        <taxon>Eukaryota</taxon>
        <taxon>Viridiplantae</taxon>
        <taxon>Streptophyta</taxon>
        <taxon>Embryophyta</taxon>
        <taxon>Tracheophyta</taxon>
        <taxon>Spermatophyta</taxon>
        <taxon>Magnoliopsida</taxon>
        <taxon>eudicotyledons</taxon>
        <taxon>Gunneridae</taxon>
        <taxon>Pentapetalae</taxon>
        <taxon>rosids</taxon>
        <taxon>malvids</taxon>
        <taxon>Brassicales</taxon>
        <taxon>Brassicaceae</taxon>
        <taxon>Camelineae</taxon>
        <taxon>Arabidopsis</taxon>
    </lineage>
</organism>
<feature type="chain" id="PRO_0000290405" description="Ethylene-responsive transcription factor ERF070">
    <location>
        <begin position="1"/>
        <end position="161"/>
    </location>
</feature>
<feature type="DNA-binding region" description="AP2/ERF" evidence="2">
    <location>
        <begin position="78"/>
        <end position="140"/>
    </location>
</feature>
<feature type="region of interest" description="Disordered" evidence="3">
    <location>
        <begin position="1"/>
        <end position="35"/>
    </location>
</feature>
<feature type="sequence conflict" description="In Ref. 5; AAM63122." evidence="4" ref="5">
    <original>D</original>
    <variation>Y</variation>
    <location>
        <position position="55"/>
    </location>
</feature>
<feature type="sequence conflict" description="In Ref. 5; AAM63122." evidence="4" ref="5">
    <original>A</original>
    <variation>S</variation>
    <location>
        <position position="100"/>
    </location>
</feature>
<name>ERF70_ARATH</name>
<protein>
    <recommendedName>
        <fullName>Ethylene-responsive transcription factor ERF070</fullName>
    </recommendedName>
</protein>
<accession>Q9C995</accession>
<accession>Q8LDM5</accession>
<comment type="function">
    <text evidence="1">Probably acts as a transcriptional activator. Binds to the GCC-box pathogenesis-related promoter element. May be involved in the regulation of gene expression by stress factors and by components of stress signal transduction pathways (By similarity).</text>
</comment>
<comment type="interaction">
    <interactant intactId="EBI-5568333">
        <id>Q9C995</id>
    </interactant>
    <interactant intactId="EBI-5567273">
        <id>Q9SUQ2</id>
        <label>CRF2</label>
    </interactant>
    <organismsDiffer>false</organismsDiffer>
    <experiments>4</experiments>
</comment>
<comment type="interaction">
    <interactant intactId="EBI-5568333">
        <id>Q9C995</id>
    </interactant>
    <interactant intactId="EBI-5567993">
        <id>Q9FK12</id>
        <label>CRF3</label>
    </interactant>
    <organismsDiffer>false</organismsDiffer>
    <experiments>4</experiments>
</comment>
<comment type="interaction">
    <interactant intactId="EBI-5568333">
        <id>Q9C995</id>
    </interactant>
    <interactant intactId="EBI-5567027">
        <id>Q9SUE3</id>
        <label>CRF4</label>
    </interactant>
    <organismsDiffer>false</organismsDiffer>
    <experiments>3</experiments>
</comment>
<comment type="interaction">
    <interactant intactId="EBI-5568333">
        <id>Q9C995</id>
    </interactant>
    <interactant intactId="EBI-5567180">
        <id>O82339</id>
        <label>CRF5</label>
    </interactant>
    <organismsDiffer>false</organismsDiffer>
    <experiments>3</experiments>
</comment>
<comment type="interaction">
    <interactant intactId="EBI-5568333">
        <id>Q9C995</id>
    </interactant>
    <interactant intactId="EBI-5568101">
        <id>Q9M374</id>
        <label>CRF6</label>
    </interactant>
    <organismsDiffer>false</organismsDiffer>
    <experiments>3</experiments>
</comment>
<comment type="interaction">
    <interactant intactId="EBI-5568333">
        <id>Q9C995</id>
    </interactant>
    <interactant intactId="EBI-5568301">
        <id>Q8W4I5</id>
        <label>ERF069</label>
    </interactant>
    <organismsDiffer>false</organismsDiffer>
    <experiments>3</experiments>
</comment>
<comment type="interaction">
    <interactant intactId="EBI-5568333">
        <id>Q9C995</id>
    </interactant>
    <interactant intactId="EBI-15192147">
        <id>Q9M2V2</id>
        <label>T12E18_40</label>
    </interactant>
    <organismsDiffer>false</organismsDiffer>
    <experiments>3</experiments>
</comment>
<comment type="subcellular location">
    <subcellularLocation>
        <location evidence="4">Nucleus</location>
    </subcellularLocation>
</comment>
<comment type="similarity">
    <text evidence="4">Belongs to the AP2/ERF transcription factor family. ERF subfamily.</text>
</comment>
<reference key="1">
    <citation type="journal article" date="2000" name="Nature">
        <title>Sequence and analysis of chromosome 1 of the plant Arabidopsis thaliana.</title>
        <authorList>
            <person name="Theologis A."/>
            <person name="Ecker J.R."/>
            <person name="Palm C.J."/>
            <person name="Federspiel N.A."/>
            <person name="Kaul S."/>
            <person name="White O."/>
            <person name="Alonso J."/>
            <person name="Altafi H."/>
            <person name="Araujo R."/>
            <person name="Bowman C.L."/>
            <person name="Brooks S.Y."/>
            <person name="Buehler E."/>
            <person name="Chan A."/>
            <person name="Chao Q."/>
            <person name="Chen H."/>
            <person name="Cheuk R.F."/>
            <person name="Chin C.W."/>
            <person name="Chung M.K."/>
            <person name="Conn L."/>
            <person name="Conway A.B."/>
            <person name="Conway A.R."/>
            <person name="Creasy T.H."/>
            <person name="Dewar K."/>
            <person name="Dunn P."/>
            <person name="Etgu P."/>
            <person name="Feldblyum T.V."/>
            <person name="Feng J.-D."/>
            <person name="Fong B."/>
            <person name="Fujii C.Y."/>
            <person name="Gill J.E."/>
            <person name="Goldsmith A.D."/>
            <person name="Haas B."/>
            <person name="Hansen N.F."/>
            <person name="Hughes B."/>
            <person name="Huizar L."/>
            <person name="Hunter J.L."/>
            <person name="Jenkins J."/>
            <person name="Johnson-Hopson C."/>
            <person name="Khan S."/>
            <person name="Khaykin E."/>
            <person name="Kim C.J."/>
            <person name="Koo H.L."/>
            <person name="Kremenetskaia I."/>
            <person name="Kurtz D.B."/>
            <person name="Kwan A."/>
            <person name="Lam B."/>
            <person name="Langin-Hooper S."/>
            <person name="Lee A."/>
            <person name="Lee J.M."/>
            <person name="Lenz C.A."/>
            <person name="Li J.H."/>
            <person name="Li Y.-P."/>
            <person name="Lin X."/>
            <person name="Liu S.X."/>
            <person name="Liu Z.A."/>
            <person name="Luros J.S."/>
            <person name="Maiti R."/>
            <person name="Marziali A."/>
            <person name="Militscher J."/>
            <person name="Miranda M."/>
            <person name="Nguyen M."/>
            <person name="Nierman W.C."/>
            <person name="Osborne B.I."/>
            <person name="Pai G."/>
            <person name="Peterson J."/>
            <person name="Pham P.K."/>
            <person name="Rizzo M."/>
            <person name="Rooney T."/>
            <person name="Rowley D."/>
            <person name="Sakano H."/>
            <person name="Salzberg S.L."/>
            <person name="Schwartz J.R."/>
            <person name="Shinn P."/>
            <person name="Southwick A.M."/>
            <person name="Sun H."/>
            <person name="Tallon L.J."/>
            <person name="Tambunga G."/>
            <person name="Toriumi M.J."/>
            <person name="Town C.D."/>
            <person name="Utterback T."/>
            <person name="Van Aken S."/>
            <person name="Vaysberg M."/>
            <person name="Vysotskaia V.S."/>
            <person name="Walker M."/>
            <person name="Wu D."/>
            <person name="Yu G."/>
            <person name="Fraser C.M."/>
            <person name="Venter J.C."/>
            <person name="Davis R.W."/>
        </authorList>
    </citation>
    <scope>NUCLEOTIDE SEQUENCE [LARGE SCALE GENOMIC DNA]</scope>
    <source>
        <strain>cv. Columbia</strain>
    </source>
</reference>
<reference key="2">
    <citation type="journal article" date="2017" name="Plant J.">
        <title>Araport11: a complete reannotation of the Arabidopsis thaliana reference genome.</title>
        <authorList>
            <person name="Cheng C.Y."/>
            <person name="Krishnakumar V."/>
            <person name="Chan A.P."/>
            <person name="Thibaud-Nissen F."/>
            <person name="Schobel S."/>
            <person name="Town C.D."/>
        </authorList>
    </citation>
    <scope>GENOME REANNOTATION</scope>
    <source>
        <strain>cv. Columbia</strain>
    </source>
</reference>
<reference key="3">
    <citation type="submission" date="2004-09" db="EMBL/GenBank/DDBJ databases">
        <title>Large-scale analysis of RIKEN Arabidopsis full-length (RAFL) cDNAs.</title>
        <authorList>
            <person name="Totoki Y."/>
            <person name="Seki M."/>
            <person name="Ishida J."/>
            <person name="Nakajima M."/>
            <person name="Enju A."/>
            <person name="Kamiya A."/>
            <person name="Narusaka M."/>
            <person name="Shin-i T."/>
            <person name="Nakagawa M."/>
            <person name="Sakamoto N."/>
            <person name="Oishi K."/>
            <person name="Kohara Y."/>
            <person name="Kobayashi M."/>
            <person name="Toyoda A."/>
            <person name="Sakaki Y."/>
            <person name="Sakurai T."/>
            <person name="Iida K."/>
            <person name="Akiyama K."/>
            <person name="Satou M."/>
            <person name="Toyoda T."/>
            <person name="Konagaya A."/>
            <person name="Carninci P."/>
            <person name="Kawai J."/>
            <person name="Hayashizaki Y."/>
            <person name="Shinozaki K."/>
        </authorList>
    </citation>
    <scope>NUCLEOTIDE SEQUENCE [LARGE SCALE MRNA]</scope>
    <source>
        <strain>cv. Columbia</strain>
    </source>
</reference>
<reference key="4">
    <citation type="submission" date="2006-05" db="EMBL/GenBank/DDBJ databases">
        <title>Arabidopsis ORF clones.</title>
        <authorList>
            <person name="Quinitio C."/>
            <person name="Chen H."/>
            <person name="Kim C.J."/>
            <person name="Shinn P."/>
            <person name="Ecker J.R."/>
        </authorList>
    </citation>
    <scope>NUCLEOTIDE SEQUENCE [LARGE SCALE MRNA]</scope>
    <source>
        <strain>cv. Columbia</strain>
    </source>
</reference>
<reference key="5">
    <citation type="submission" date="2002-03" db="EMBL/GenBank/DDBJ databases">
        <title>Full-length cDNA from Arabidopsis thaliana.</title>
        <authorList>
            <person name="Brover V.V."/>
            <person name="Troukhan M.E."/>
            <person name="Alexandrov N.A."/>
            <person name="Lu Y.-P."/>
            <person name="Flavell R.B."/>
            <person name="Feldmann K.A."/>
        </authorList>
    </citation>
    <scope>NUCLEOTIDE SEQUENCE [LARGE SCALE MRNA]</scope>
</reference>
<reference key="6">
    <citation type="journal article" date="2006" name="Plant Physiol.">
        <title>Genome-wide analysis of the ERF gene family in Arabidopsis and rice.</title>
        <authorList>
            <person name="Nakano T."/>
            <person name="Suzuki K."/>
            <person name="Fujimura T."/>
            <person name="Shinshi H."/>
        </authorList>
    </citation>
    <scope>GENE FAMILY</scope>
    <scope>NOMENCLATURE</scope>
</reference>
<evidence type="ECO:0000250" key="1"/>
<evidence type="ECO:0000255" key="2">
    <source>
        <dbReference type="PROSITE-ProRule" id="PRU00366"/>
    </source>
</evidence>
<evidence type="ECO:0000256" key="3">
    <source>
        <dbReference type="SAM" id="MobiDB-lite"/>
    </source>
</evidence>
<evidence type="ECO:0000305" key="4"/>
<gene>
    <name type="primary">ERF070</name>
    <name type="ordered locus">At1g71130</name>
    <name type="ORF">F23N20.12</name>
</gene>
<proteinExistence type="evidence at protein level"/>
<dbReference type="EMBL" id="AC016972">
    <property type="protein sequence ID" value="AAG51689.1"/>
    <property type="molecule type" value="Genomic_DNA"/>
</dbReference>
<dbReference type="EMBL" id="CP002684">
    <property type="protein sequence ID" value="AEE35164.1"/>
    <property type="molecule type" value="Genomic_DNA"/>
</dbReference>
<dbReference type="EMBL" id="AK175578">
    <property type="protein sequence ID" value="BAD43341.1"/>
    <property type="molecule type" value="mRNA"/>
</dbReference>
<dbReference type="EMBL" id="AK175683">
    <property type="protein sequence ID" value="BAD43446.1"/>
    <property type="molecule type" value="mRNA"/>
</dbReference>
<dbReference type="EMBL" id="AK175740">
    <property type="protein sequence ID" value="BAD43503.1"/>
    <property type="molecule type" value="mRNA"/>
</dbReference>
<dbReference type="EMBL" id="AK175774">
    <property type="protein sequence ID" value="BAD43537.1"/>
    <property type="molecule type" value="mRNA"/>
</dbReference>
<dbReference type="EMBL" id="AK175931">
    <property type="protein sequence ID" value="BAD43694.1"/>
    <property type="molecule type" value="mRNA"/>
</dbReference>
<dbReference type="EMBL" id="AK176043">
    <property type="protein sequence ID" value="BAD43806.1"/>
    <property type="molecule type" value="mRNA"/>
</dbReference>
<dbReference type="EMBL" id="AK176144">
    <property type="protein sequence ID" value="BAD43907.1"/>
    <property type="molecule type" value="mRNA"/>
</dbReference>
<dbReference type="EMBL" id="AK176280">
    <property type="protein sequence ID" value="BAD44043.1"/>
    <property type="molecule type" value="mRNA"/>
</dbReference>
<dbReference type="EMBL" id="BT025618">
    <property type="protein sequence ID" value="ABF59036.1"/>
    <property type="molecule type" value="mRNA"/>
</dbReference>
<dbReference type="EMBL" id="AY085910">
    <property type="protein sequence ID" value="AAM63122.1"/>
    <property type="molecule type" value="mRNA"/>
</dbReference>
<dbReference type="PIR" id="H96735">
    <property type="entry name" value="H96735"/>
</dbReference>
<dbReference type="SMR" id="Q9C995"/>
<dbReference type="BioGRID" id="28673">
    <property type="interactions" value="29"/>
</dbReference>
<dbReference type="FunCoup" id="Q9C995">
    <property type="interactions" value="15"/>
</dbReference>
<dbReference type="IntAct" id="Q9C995">
    <property type="interactions" value="29"/>
</dbReference>
<dbReference type="STRING" id="3702.Q9C995"/>
<dbReference type="PaxDb" id="3702-AT1G71130.1"/>
<dbReference type="ProteomicsDB" id="220684"/>
<dbReference type="EnsemblPlants" id="AT1G71130.1">
    <property type="protein sequence ID" value="AT1G71130.1"/>
    <property type="gene ID" value="AT1G71130"/>
</dbReference>
<dbReference type="GeneID" id="843453"/>
<dbReference type="Gramene" id="AT1G71130.1">
    <property type="protein sequence ID" value="AT1G71130.1"/>
    <property type="gene ID" value="AT1G71130"/>
</dbReference>
<dbReference type="KEGG" id="ath:AT1G71130"/>
<dbReference type="Araport" id="AT1G71130"/>
<dbReference type="TAIR" id="AT1G71130">
    <property type="gene designation" value="CRF8"/>
</dbReference>
<dbReference type="eggNOG" id="ENOG502R7AV">
    <property type="taxonomic scope" value="Eukaryota"/>
</dbReference>
<dbReference type="HOGENOM" id="CLU_062946_3_0_1"/>
<dbReference type="InParanoid" id="Q9C995"/>
<dbReference type="OMA" id="PHAVTNF"/>
<dbReference type="OrthoDB" id="610645at2759"/>
<dbReference type="PhylomeDB" id="Q9C995"/>
<dbReference type="PRO" id="PR:Q9C995"/>
<dbReference type="Proteomes" id="UP000006548">
    <property type="component" value="Chromosome 1"/>
</dbReference>
<dbReference type="ExpressionAtlas" id="Q9C995">
    <property type="expression patterns" value="baseline and differential"/>
</dbReference>
<dbReference type="GO" id="GO:0005634">
    <property type="term" value="C:nucleus"/>
    <property type="evidence" value="ECO:0007669"/>
    <property type="project" value="UniProtKB-SubCell"/>
</dbReference>
<dbReference type="GO" id="GO:0003700">
    <property type="term" value="F:DNA-binding transcription factor activity"/>
    <property type="evidence" value="ECO:0000250"/>
    <property type="project" value="TAIR"/>
</dbReference>
<dbReference type="GO" id="GO:0000976">
    <property type="term" value="F:transcription cis-regulatory region binding"/>
    <property type="evidence" value="ECO:0000353"/>
    <property type="project" value="TAIR"/>
</dbReference>
<dbReference type="GO" id="GO:0009873">
    <property type="term" value="P:ethylene-activated signaling pathway"/>
    <property type="evidence" value="ECO:0007669"/>
    <property type="project" value="UniProtKB-KW"/>
</dbReference>
<dbReference type="CDD" id="cd00018">
    <property type="entry name" value="AP2"/>
    <property type="match status" value="1"/>
</dbReference>
<dbReference type="FunFam" id="3.30.730.10:FF:000001">
    <property type="entry name" value="Ethylene-responsive transcription factor 2"/>
    <property type="match status" value="1"/>
</dbReference>
<dbReference type="Gene3D" id="3.30.730.10">
    <property type="entry name" value="AP2/ERF domain"/>
    <property type="match status" value="1"/>
</dbReference>
<dbReference type="InterPro" id="IPR017392">
    <property type="entry name" value="AP2/ERF-transcript_factor"/>
</dbReference>
<dbReference type="InterPro" id="IPR001471">
    <property type="entry name" value="AP2/ERF_dom"/>
</dbReference>
<dbReference type="InterPro" id="IPR036955">
    <property type="entry name" value="AP2/ERF_dom_sf"/>
</dbReference>
<dbReference type="InterPro" id="IPR050913">
    <property type="entry name" value="AP2/ERF_ERF_subfamily"/>
</dbReference>
<dbReference type="InterPro" id="IPR016177">
    <property type="entry name" value="DNA-bd_dom_sf"/>
</dbReference>
<dbReference type="PANTHER" id="PTHR31194:SF202">
    <property type="entry name" value="ETHYLENE-RESPONSIVE TRANSCRIPTION FACTOR ERF070"/>
    <property type="match status" value="1"/>
</dbReference>
<dbReference type="PANTHER" id="PTHR31194">
    <property type="entry name" value="SHN SHINE , DNA BINDING / TRANSCRIPTION FACTOR"/>
    <property type="match status" value="1"/>
</dbReference>
<dbReference type="Pfam" id="PF00847">
    <property type="entry name" value="AP2"/>
    <property type="match status" value="1"/>
</dbReference>
<dbReference type="PIRSF" id="PIRSF038123">
    <property type="entry name" value="PTI6"/>
    <property type="match status" value="1"/>
</dbReference>
<dbReference type="PRINTS" id="PR00367">
    <property type="entry name" value="ETHRSPELEMNT"/>
</dbReference>
<dbReference type="SMART" id="SM00380">
    <property type="entry name" value="AP2"/>
    <property type="match status" value="1"/>
</dbReference>
<dbReference type="SUPFAM" id="SSF54171">
    <property type="entry name" value="DNA-binding domain"/>
    <property type="match status" value="1"/>
</dbReference>
<dbReference type="PROSITE" id="PS51032">
    <property type="entry name" value="AP2_ERF"/>
    <property type="match status" value="1"/>
</dbReference>
<sequence>MKRIIRISFTDAEATDSSSDEDTEERGGASQTRRRGKRLVKEIVIDPSDSADKLDVCKTRFKIRIPAEFLKTAKTEKKYRGVRQRPWGKWVAEIRCGRGACKGRRDRLWLGTFNTAEEAALAYDNASIKLIGPHAPTNFGLPAENQEDKTVIGASEVARGA</sequence>